<feature type="signal peptide" evidence="1">
    <location>
        <begin position="1"/>
        <end position="23"/>
    </location>
</feature>
<feature type="chain" id="PRO_0000014074" description="Uncharacterized protein Rv0477">
    <location>
        <begin position="24"/>
        <end position="148"/>
    </location>
</feature>
<feature type="region of interest" description="Disordered" evidence="2">
    <location>
        <begin position="22"/>
        <end position="45"/>
    </location>
</feature>
<name>Y477_MYCTU</name>
<dbReference type="EMBL" id="AL123456">
    <property type="protein sequence ID" value="CCP43211.1"/>
    <property type="molecule type" value="Genomic_DNA"/>
</dbReference>
<dbReference type="PIR" id="H70742">
    <property type="entry name" value="H70742"/>
</dbReference>
<dbReference type="RefSeq" id="NP_214991.1">
    <property type="nucleotide sequence ID" value="NC_000962.3"/>
</dbReference>
<dbReference type="RefSeq" id="WP_003402344.1">
    <property type="nucleotide sequence ID" value="NZ_NVQJ01000002.1"/>
</dbReference>
<dbReference type="STRING" id="83332.Rv0477"/>
<dbReference type="PaxDb" id="83332-Rv0477"/>
<dbReference type="DNASU" id="886273"/>
<dbReference type="GeneID" id="886273"/>
<dbReference type="KEGG" id="mtu:Rv0477"/>
<dbReference type="KEGG" id="mtv:RVBD_0477"/>
<dbReference type="TubercuList" id="Rv0477"/>
<dbReference type="eggNOG" id="ENOG5033526">
    <property type="taxonomic scope" value="Bacteria"/>
</dbReference>
<dbReference type="InParanoid" id="P9WKV9"/>
<dbReference type="OrthoDB" id="4412570at2"/>
<dbReference type="Proteomes" id="UP000001584">
    <property type="component" value="Chromosome"/>
</dbReference>
<dbReference type="GO" id="GO:0005576">
    <property type="term" value="C:extracellular region"/>
    <property type="evidence" value="ECO:0007005"/>
    <property type="project" value="MTBBASE"/>
</dbReference>
<dbReference type="InterPro" id="IPR019719">
    <property type="entry name" value="DUF2599"/>
</dbReference>
<dbReference type="Pfam" id="PF10783">
    <property type="entry name" value="DUF2599"/>
    <property type="match status" value="1"/>
</dbReference>
<keyword id="KW-1185">Reference proteome</keyword>
<keyword id="KW-0732">Signal</keyword>
<organism>
    <name type="scientific">Mycobacterium tuberculosis (strain ATCC 25618 / H37Rv)</name>
    <dbReference type="NCBI Taxonomy" id="83332"/>
    <lineage>
        <taxon>Bacteria</taxon>
        <taxon>Bacillati</taxon>
        <taxon>Actinomycetota</taxon>
        <taxon>Actinomycetes</taxon>
        <taxon>Mycobacteriales</taxon>
        <taxon>Mycobacteriaceae</taxon>
        <taxon>Mycobacterium</taxon>
        <taxon>Mycobacterium tuberculosis complex</taxon>
    </lineage>
</organism>
<protein>
    <recommendedName>
        <fullName>Uncharacterized protein Rv0477</fullName>
    </recommendedName>
</protein>
<comment type="similarity">
    <text evidence="3">To M.leprae ML2452.</text>
</comment>
<evidence type="ECO:0000255" key="1"/>
<evidence type="ECO:0000256" key="2">
    <source>
        <dbReference type="SAM" id="MobiDB-lite"/>
    </source>
</evidence>
<evidence type="ECO:0000305" key="3"/>
<accession>P9WKV9</accession>
<accession>L0T3V4</accession>
<accession>P64697</accession>
<accession>Q11144</accession>
<gene>
    <name type="ordered locus">Rv0477</name>
    <name type="ORF">MTCY20G9.03</name>
</gene>
<reference key="1">
    <citation type="journal article" date="1998" name="Nature">
        <title>Deciphering the biology of Mycobacterium tuberculosis from the complete genome sequence.</title>
        <authorList>
            <person name="Cole S.T."/>
            <person name="Brosch R."/>
            <person name="Parkhill J."/>
            <person name="Garnier T."/>
            <person name="Churcher C.M."/>
            <person name="Harris D.E."/>
            <person name="Gordon S.V."/>
            <person name="Eiglmeier K."/>
            <person name="Gas S."/>
            <person name="Barry C.E. III"/>
            <person name="Tekaia F."/>
            <person name="Badcock K."/>
            <person name="Basham D."/>
            <person name="Brown D."/>
            <person name="Chillingworth T."/>
            <person name="Connor R."/>
            <person name="Davies R.M."/>
            <person name="Devlin K."/>
            <person name="Feltwell T."/>
            <person name="Gentles S."/>
            <person name="Hamlin N."/>
            <person name="Holroyd S."/>
            <person name="Hornsby T."/>
            <person name="Jagels K."/>
            <person name="Krogh A."/>
            <person name="McLean J."/>
            <person name="Moule S."/>
            <person name="Murphy L.D."/>
            <person name="Oliver S."/>
            <person name="Osborne J."/>
            <person name="Quail M.A."/>
            <person name="Rajandream M.A."/>
            <person name="Rogers J."/>
            <person name="Rutter S."/>
            <person name="Seeger K."/>
            <person name="Skelton S."/>
            <person name="Squares S."/>
            <person name="Squares R."/>
            <person name="Sulston J.E."/>
            <person name="Taylor K."/>
            <person name="Whitehead S."/>
            <person name="Barrell B.G."/>
        </authorList>
    </citation>
    <scope>NUCLEOTIDE SEQUENCE [LARGE SCALE GENOMIC DNA]</scope>
    <source>
        <strain>ATCC 25618 / H37Rv</strain>
    </source>
</reference>
<reference key="2">
    <citation type="journal article" date="2011" name="Mol. Cell. Proteomics">
        <title>Proteogenomic analysis of Mycobacterium tuberculosis by high resolution mass spectrometry.</title>
        <authorList>
            <person name="Kelkar D.S."/>
            <person name="Kumar D."/>
            <person name="Kumar P."/>
            <person name="Balakrishnan L."/>
            <person name="Muthusamy B."/>
            <person name="Yadav A.K."/>
            <person name="Shrivastava P."/>
            <person name="Marimuthu A."/>
            <person name="Anand S."/>
            <person name="Sundaram H."/>
            <person name="Kingsbury R."/>
            <person name="Harsha H.C."/>
            <person name="Nair B."/>
            <person name="Prasad T.S."/>
            <person name="Chauhan D.S."/>
            <person name="Katoch K."/>
            <person name="Katoch V.M."/>
            <person name="Kumar P."/>
            <person name="Chaerkady R."/>
            <person name="Ramachandran S."/>
            <person name="Dash D."/>
            <person name="Pandey A."/>
        </authorList>
    </citation>
    <scope>IDENTIFICATION BY MASS SPECTROMETRY [LARGE SCALE ANALYSIS]</scope>
    <source>
        <strain>ATCC 25618 / H37Rv</strain>
    </source>
</reference>
<sequence length="148" mass="15659">MKALVAVSAVAVVALLGVSSAQADPEADPGAGEANYGGPPSSPRLVDHTEWAQWGSLPSLRVYPSQVGRTASRRLGMAAADAAWAEVLALSPEADTAGMRAQFICHWQYAEIRQPGKPSWNLEPWRPVVDDSEMLASGCNPGSPEESF</sequence>
<proteinExistence type="evidence at protein level"/>